<organism>
    <name type="scientific">Caenorhabditis elegans</name>
    <dbReference type="NCBI Taxonomy" id="6239"/>
    <lineage>
        <taxon>Eukaryota</taxon>
        <taxon>Metazoa</taxon>
        <taxon>Ecdysozoa</taxon>
        <taxon>Nematoda</taxon>
        <taxon>Chromadorea</taxon>
        <taxon>Rhabditida</taxon>
        <taxon>Rhabditina</taxon>
        <taxon>Rhabditomorpha</taxon>
        <taxon>Rhabditoidea</taxon>
        <taxon>Rhabditidae</taxon>
        <taxon>Peloderinae</taxon>
        <taxon>Caenorhabditis</taxon>
    </lineage>
</organism>
<reference evidence="8" key="1">
    <citation type="journal article" date="1998" name="Science">
        <title>Genome sequence of the nematode C. elegans: a platform for investigating biology.</title>
        <authorList>
            <consortium name="The C. elegans sequencing consortium"/>
        </authorList>
    </citation>
    <scope>NUCLEOTIDE SEQUENCE [LARGE SCALE GENOMIC DNA]</scope>
    <scope>ALTERNATIVE SPLICING</scope>
    <source>
        <strain>Bristol N2</strain>
    </source>
</reference>
<reference evidence="7" key="2">
    <citation type="journal article" date="1995" name="Genetics">
        <title>Analysis of dominant mutations affecting muscle excitation in Caenorhabditis elegans.</title>
        <authorList>
            <person name="Reiner D.J."/>
            <person name="Weinshenker D."/>
            <person name="Thomas J.H."/>
        </authorList>
    </citation>
    <scope>FUNCTION</scope>
    <scope>DISRUPTION PHENOTYPE</scope>
</reference>
<reference evidence="7" key="3">
    <citation type="journal article" date="2002" name="Proc. Natl. Acad. Sci. U.S.A.">
        <title>Caenorhabditis elegans DNA mismatch repair gene msh-2 is required for microsatellite stability and maintenance of genome integrity.</title>
        <authorList>
            <person name="Degtyareva N.P."/>
            <person name="Greenwell P."/>
            <person name="Hofmann E.R."/>
            <person name="Hengartner M.O."/>
            <person name="Zhang L."/>
            <person name="Culotti J.G."/>
            <person name="Petes T.D."/>
        </authorList>
    </citation>
    <scope>FUNCTION</scope>
</reference>
<reference key="4">
    <citation type="journal article" date="2007" name="Mol. Cell. Proteomics">
        <title>Proteomics reveals N-linked glycoprotein diversity in Caenorhabditis elegans and suggests an atypical translocation mechanism for integral membrane proteins.</title>
        <authorList>
            <person name="Kaji H."/>
            <person name="Kamiie J."/>
            <person name="Kawakami H."/>
            <person name="Kido K."/>
            <person name="Yamauchi Y."/>
            <person name="Shinkawa T."/>
            <person name="Taoka M."/>
            <person name="Takahashi N."/>
            <person name="Isobe T."/>
        </authorList>
    </citation>
    <scope>GLYCOSYLATION [LARGE SCALE ANALYSIS] AT ASN-226</scope>
    <scope>IDENTIFICATION BY MASS SPECTROMETRY</scope>
    <source>
        <strain>Bristol N2</strain>
    </source>
</reference>
<name>UNC58_CAEEL</name>
<sequence length="591" mass="67391">MFFYSPNVAPQPSSTSHRRPTLTHQHHLHVGHLDTRLSVQIPEILSRSLVHDPERTRLVPEQLRFIIDENQELWTGSQPPTGFLELCASPVSSVFSNADARRMSQRKLVLRRPTISIQEDGKIIIDHVTARWEGANINSQSALLDADDGATVITDTIKDDQDDKEPKSCPQQTVKYIKILTPHVILVSVLIGYLCLGAWILMLLETRTELLARSKKLVRLTNLMSNFTAESWKMLNNAQHGVSNMDEGEWAATFREWMVRVSETVDDRRPIRRELNRPDDLSNMHNKWTFPTAILYVLTVLTTCGYGEVSVDTDVGKVFSVAFALVGIPLMFITAADIGKFLSETLLQFVSFWNRSVRKVKQWMSRIRHGRRKSLQSTGGPNDTLDILGVDGTEEKLWFPIGAYVSCICIYCSIGSAMFITWERTWSFIHAFHFGFNLIVTVGLGDIVVTDYIFLSLIVAFVIVGLSVVTMCVDLASTHLKAYFTRIHYFGRAKRFLGMSEELKEIVALLGAMRRKKGGKVTWNDVRDFLDNELRDRPFEPHELLMKLRFIDETSSGMSTIRHNSFQSDFFRESEYIRRVAALRPEQPAYL</sequence>
<gene>
    <name evidence="8" type="primary">unc-58</name>
    <name type="ORF">T06H11.1</name>
</gene>
<keyword id="KW-0025">Alternative splicing</keyword>
<keyword id="KW-0325">Glycoprotein</keyword>
<keyword id="KW-0407">Ion channel</keyword>
<keyword id="KW-0406">Ion transport</keyword>
<keyword id="KW-0472">Membrane</keyword>
<keyword id="KW-1185">Reference proteome</keyword>
<keyword id="KW-0812">Transmembrane</keyword>
<keyword id="KW-1133">Transmembrane helix</keyword>
<keyword id="KW-0813">Transport</keyword>
<protein>
    <recommendedName>
        <fullName>Uncoordinated protein 58</fullName>
    </recommendedName>
</protein>
<comment type="function">
    <text evidence="3 5">Has a role in mobility, possibly in the transport of potassium in muscles.</text>
</comment>
<comment type="subcellular location">
    <subcellularLocation>
        <location evidence="1">Membrane</location>
        <topology evidence="1">Multi-pass membrane protein</topology>
    </subcellularLocation>
</comment>
<comment type="alternative products">
    <event type="alternative splicing"/>
    <isoform>
        <id>Q22271-1</id>
        <name evidence="6">a</name>
        <sequence type="displayed"/>
    </isoform>
    <isoform>
        <id>Q22271-2</id>
        <name evidence="6">b</name>
        <sequence type="described" ref="VSP_052547"/>
    </isoform>
</comment>
<comment type="disruption phenotype">
    <text evidence="5">Worms exhibit defects in mobility. Mutation causes a dumpy (dpy) phenotype thought to be due to hyper-activation of body-wall muscle. Severe mutations cause paralysis thought to be a result of fully contracted muscles.</text>
</comment>
<comment type="similarity">
    <text evidence="1">Belongs to the two pore domain potassium channel (TC 1.A.1.8) family.</text>
</comment>
<accession>Q22271</accession>
<accession>Q8MPX9</accession>
<dbReference type="EMBL" id="Z49889">
    <property type="protein sequence ID" value="CAA90066.2"/>
    <property type="molecule type" value="Genomic_DNA"/>
</dbReference>
<dbReference type="EMBL" id="Z49889">
    <property type="protein sequence ID" value="CAD44149.1"/>
    <property type="molecule type" value="Genomic_DNA"/>
</dbReference>
<dbReference type="PIR" id="T24626">
    <property type="entry name" value="T24626"/>
</dbReference>
<dbReference type="RefSeq" id="NP_741880.1">
    <molecule id="Q22271-2"/>
    <property type="nucleotide sequence ID" value="NM_171758.5"/>
</dbReference>
<dbReference type="RefSeq" id="NP_741881.1">
    <molecule id="Q22271-1"/>
    <property type="nucleotide sequence ID" value="NM_171759.6"/>
</dbReference>
<dbReference type="STRING" id="6239.T06H11.1a.1"/>
<dbReference type="GlyCosmos" id="Q22271">
    <property type="glycosylation" value="1 site, No reported glycans"/>
</dbReference>
<dbReference type="iPTMnet" id="Q22271"/>
<dbReference type="PaxDb" id="6239-T06H11.1a"/>
<dbReference type="EnsemblMetazoa" id="T06H11.1a.1">
    <molecule id="Q22271-1"/>
    <property type="protein sequence ID" value="T06H11.1a.1"/>
    <property type="gene ID" value="WBGene00006792"/>
</dbReference>
<dbReference type="EnsemblMetazoa" id="T06H11.1b.1">
    <molecule id="Q22271-2"/>
    <property type="protein sequence ID" value="T06H11.1b.1"/>
    <property type="gene ID" value="WBGene00006792"/>
</dbReference>
<dbReference type="GeneID" id="181224"/>
<dbReference type="KEGG" id="cel:CELE_T06H11.1"/>
<dbReference type="UCSC" id="T06H11.1b">
    <molecule id="Q22271-1"/>
    <property type="organism name" value="c. elegans"/>
</dbReference>
<dbReference type="AGR" id="WB:WBGene00006792"/>
<dbReference type="CTD" id="181224"/>
<dbReference type="WormBase" id="T06H11.1a">
    <molecule id="Q22271-1"/>
    <property type="protein sequence ID" value="CE31594"/>
    <property type="gene ID" value="WBGene00006792"/>
    <property type="gene designation" value="unc-58"/>
</dbReference>
<dbReference type="WormBase" id="T06H11.1b">
    <molecule id="Q22271-2"/>
    <property type="protein sequence ID" value="CE31595"/>
    <property type="gene ID" value="WBGene00006792"/>
    <property type="gene designation" value="unc-58"/>
</dbReference>
<dbReference type="eggNOG" id="KOG1418">
    <property type="taxonomic scope" value="Eukaryota"/>
</dbReference>
<dbReference type="HOGENOM" id="CLU_032755_1_0_1"/>
<dbReference type="InParanoid" id="Q22271"/>
<dbReference type="OMA" id="VSCICLY"/>
<dbReference type="OrthoDB" id="5916454at2759"/>
<dbReference type="PhylomeDB" id="Q22271"/>
<dbReference type="PRO" id="PR:Q22271"/>
<dbReference type="Proteomes" id="UP000001940">
    <property type="component" value="Chromosome X"/>
</dbReference>
<dbReference type="Bgee" id="WBGene00006792">
    <property type="expression patterns" value="Expressed in larva and 3 other cell types or tissues"/>
</dbReference>
<dbReference type="ExpressionAtlas" id="Q22271">
    <property type="expression patterns" value="baseline and differential"/>
</dbReference>
<dbReference type="GO" id="GO:0005886">
    <property type="term" value="C:plasma membrane"/>
    <property type="evidence" value="ECO:0000318"/>
    <property type="project" value="GO_Central"/>
</dbReference>
<dbReference type="GO" id="GO:0015271">
    <property type="term" value="F:outward rectifier potassium channel activity"/>
    <property type="evidence" value="ECO:0000314"/>
    <property type="project" value="WormBase"/>
</dbReference>
<dbReference type="GO" id="GO:0022841">
    <property type="term" value="F:potassium ion leak channel activity"/>
    <property type="evidence" value="ECO:0000318"/>
    <property type="project" value="GO_Central"/>
</dbReference>
<dbReference type="GO" id="GO:0040011">
    <property type="term" value="P:locomotion"/>
    <property type="evidence" value="ECO:0000315"/>
    <property type="project" value="UniProtKB"/>
</dbReference>
<dbReference type="GO" id="GO:0006936">
    <property type="term" value="P:muscle contraction"/>
    <property type="evidence" value="ECO:0000315"/>
    <property type="project" value="UniProtKB"/>
</dbReference>
<dbReference type="GO" id="GO:0007567">
    <property type="term" value="P:parturition"/>
    <property type="evidence" value="ECO:0000315"/>
    <property type="project" value="UniProtKB"/>
</dbReference>
<dbReference type="GO" id="GO:0071805">
    <property type="term" value="P:potassium ion transmembrane transport"/>
    <property type="evidence" value="ECO:0000318"/>
    <property type="project" value="GO_Central"/>
</dbReference>
<dbReference type="GO" id="GO:0006937">
    <property type="term" value="P:regulation of muscle contraction"/>
    <property type="evidence" value="ECO:0000315"/>
    <property type="project" value="WormBase"/>
</dbReference>
<dbReference type="Gene3D" id="1.10.287.70">
    <property type="match status" value="1"/>
</dbReference>
<dbReference type="InterPro" id="IPR003280">
    <property type="entry name" value="2pore_dom_K_chnl"/>
</dbReference>
<dbReference type="InterPro" id="IPR013099">
    <property type="entry name" value="K_chnl_dom"/>
</dbReference>
<dbReference type="PANTHER" id="PTHR11003">
    <property type="entry name" value="POTASSIUM CHANNEL, SUBFAMILY K"/>
    <property type="match status" value="1"/>
</dbReference>
<dbReference type="PANTHER" id="PTHR11003:SF310">
    <property type="entry name" value="UNCOORDINATED PROTEIN 58"/>
    <property type="match status" value="1"/>
</dbReference>
<dbReference type="Pfam" id="PF07885">
    <property type="entry name" value="Ion_trans_2"/>
    <property type="match status" value="1"/>
</dbReference>
<dbReference type="PRINTS" id="PR01333">
    <property type="entry name" value="2POREKCHANEL"/>
</dbReference>
<dbReference type="SUPFAM" id="SSF81324">
    <property type="entry name" value="Voltage-gated potassium channels"/>
    <property type="match status" value="2"/>
</dbReference>
<proteinExistence type="evidence at protein level"/>
<feature type="chain" id="PRO_0000306199" description="Uncoordinated protein 58">
    <location>
        <begin position="1"/>
        <end position="591"/>
    </location>
</feature>
<feature type="transmembrane region" description="Helical" evidence="1">
    <location>
        <begin position="184"/>
        <end position="204"/>
    </location>
</feature>
<feature type="transmembrane region" description="Helical" evidence="1">
    <location>
        <begin position="289"/>
        <end position="309"/>
    </location>
</feature>
<feature type="transmembrane region" description="Helical" evidence="1">
    <location>
        <begin position="318"/>
        <end position="338"/>
    </location>
</feature>
<feature type="transmembrane region" description="Helical" evidence="1">
    <location>
        <begin position="400"/>
        <end position="420"/>
    </location>
</feature>
<feature type="transmembrane region" description="Helical" evidence="1">
    <location>
        <begin position="428"/>
        <end position="448"/>
    </location>
</feature>
<feature type="transmembrane region" description="Helical" evidence="1">
    <location>
        <begin position="453"/>
        <end position="473"/>
    </location>
</feature>
<feature type="region of interest" description="Disordered" evidence="2">
    <location>
        <begin position="1"/>
        <end position="24"/>
    </location>
</feature>
<feature type="glycosylation site" description="N-linked (GlcNAc...) asparagine" evidence="4">
    <location>
        <position position="226"/>
    </location>
</feature>
<feature type="splice variant" id="VSP_052547" description="In isoform b." evidence="7">
    <original>MFFYSPNVAPQPSSTSHRRPTLTHQHHLHVGHLDTRLSVQIPEILSRSLVHDPERTRLVPEQLRFIIDENQELWTGSQPPTGFLELCASPVSSVFSNADARRMSQRKLVLRRPTISIQEDGKIIID</original>
    <variation>MAPLTVKSSPPKKAKGISKFRRKKKQPPPDSTVFVAWALRSVRESLIQVDPLAAALAHQARKTNSVPAVSRTPLLLQFTPFGPPLSAY</variation>
    <location>
        <begin position="1"/>
        <end position="126"/>
    </location>
</feature>
<evidence type="ECO:0000255" key="1"/>
<evidence type="ECO:0000256" key="2">
    <source>
        <dbReference type="SAM" id="MobiDB-lite"/>
    </source>
</evidence>
<evidence type="ECO:0000269" key="3">
    <source>
    </source>
</evidence>
<evidence type="ECO:0000269" key="4">
    <source>
    </source>
</evidence>
<evidence type="ECO:0000269" key="5">
    <source>
    </source>
</evidence>
<evidence type="ECO:0000269" key="6">
    <source>
    </source>
</evidence>
<evidence type="ECO:0000305" key="7"/>
<evidence type="ECO:0000312" key="8">
    <source>
        <dbReference type="EMBL" id="CAA90066.2"/>
    </source>
</evidence>